<evidence type="ECO:0000255" key="1">
    <source>
        <dbReference type="HAMAP-Rule" id="MF_00251"/>
    </source>
</evidence>
<evidence type="ECO:0000305" key="2"/>
<proteinExistence type="inferred from homology"/>
<name>RL36_PSEF5</name>
<feature type="chain" id="PRO_0000302272" description="Large ribosomal subunit protein bL36">
    <location>
        <begin position="1"/>
        <end position="49"/>
    </location>
</feature>
<reference key="1">
    <citation type="journal article" date="2005" name="Nat. Biotechnol.">
        <title>Complete genome sequence of the plant commensal Pseudomonas fluorescens Pf-5.</title>
        <authorList>
            <person name="Paulsen I.T."/>
            <person name="Press C.M."/>
            <person name="Ravel J."/>
            <person name="Kobayashi D.Y."/>
            <person name="Myers G.S.A."/>
            <person name="Mavrodi D.V."/>
            <person name="DeBoy R.T."/>
            <person name="Seshadri R."/>
            <person name="Ren Q."/>
            <person name="Madupu R."/>
            <person name="Dodson R.J."/>
            <person name="Durkin A.S."/>
            <person name="Brinkac L.M."/>
            <person name="Daugherty S.C."/>
            <person name="Sullivan S.A."/>
            <person name="Rosovitz M.J."/>
            <person name="Gwinn M.L."/>
            <person name="Zhou L."/>
            <person name="Schneider D.J."/>
            <person name="Cartinhour S.W."/>
            <person name="Nelson W.C."/>
            <person name="Weidman J."/>
            <person name="Watkins K."/>
            <person name="Tran K."/>
            <person name="Khouri H."/>
            <person name="Pierson E.A."/>
            <person name="Pierson L.S. III"/>
            <person name="Thomashow L.S."/>
            <person name="Loper J.E."/>
        </authorList>
    </citation>
    <scope>NUCLEOTIDE SEQUENCE [LARGE SCALE GENOMIC DNA]</scope>
    <source>
        <strain>ATCC BAA-477 / NRRL B-23932 / Pf-5</strain>
    </source>
</reference>
<dbReference type="EMBL" id="CP000076">
    <property type="protein sequence ID" value="AAY93070.1"/>
    <property type="molecule type" value="Genomic_DNA"/>
</dbReference>
<dbReference type="SMR" id="Q4KA27"/>
<dbReference type="STRING" id="220664.PFL_3806"/>
<dbReference type="KEGG" id="pfl:PFL_3806"/>
<dbReference type="eggNOG" id="COG0257">
    <property type="taxonomic scope" value="Bacteria"/>
</dbReference>
<dbReference type="HOGENOM" id="CLU_135723_3_2_6"/>
<dbReference type="Proteomes" id="UP000008540">
    <property type="component" value="Chromosome"/>
</dbReference>
<dbReference type="GO" id="GO:1990904">
    <property type="term" value="C:ribonucleoprotein complex"/>
    <property type="evidence" value="ECO:0007669"/>
    <property type="project" value="UniProtKB-KW"/>
</dbReference>
<dbReference type="GO" id="GO:0005840">
    <property type="term" value="C:ribosome"/>
    <property type="evidence" value="ECO:0007669"/>
    <property type="project" value="UniProtKB-KW"/>
</dbReference>
<dbReference type="GO" id="GO:0003735">
    <property type="term" value="F:structural constituent of ribosome"/>
    <property type="evidence" value="ECO:0007669"/>
    <property type="project" value="InterPro"/>
</dbReference>
<dbReference type="GO" id="GO:0006412">
    <property type="term" value="P:translation"/>
    <property type="evidence" value="ECO:0007669"/>
    <property type="project" value="UniProtKB-UniRule"/>
</dbReference>
<dbReference type="HAMAP" id="MF_00251">
    <property type="entry name" value="Ribosomal_bL36"/>
    <property type="match status" value="1"/>
</dbReference>
<dbReference type="InterPro" id="IPR000473">
    <property type="entry name" value="Ribosomal_bL36"/>
</dbReference>
<dbReference type="InterPro" id="IPR035977">
    <property type="entry name" value="Ribosomal_bL36_sp"/>
</dbReference>
<dbReference type="InterPro" id="IPR047621">
    <property type="entry name" value="Ribosomal_L36_bact"/>
</dbReference>
<dbReference type="NCBIfam" id="NF002021">
    <property type="entry name" value="PRK00831.1"/>
    <property type="match status" value="1"/>
</dbReference>
<dbReference type="NCBIfam" id="TIGR01022">
    <property type="entry name" value="rpmJ_bact"/>
    <property type="match status" value="1"/>
</dbReference>
<dbReference type="PANTHER" id="PTHR47781">
    <property type="entry name" value="50S RIBOSOMAL PROTEIN L36 2"/>
    <property type="match status" value="1"/>
</dbReference>
<dbReference type="PANTHER" id="PTHR47781:SF1">
    <property type="entry name" value="LARGE RIBOSOMAL SUBUNIT PROTEIN BL36B"/>
    <property type="match status" value="1"/>
</dbReference>
<dbReference type="Pfam" id="PF00444">
    <property type="entry name" value="Ribosomal_L36"/>
    <property type="match status" value="1"/>
</dbReference>
<dbReference type="SUPFAM" id="SSF57840">
    <property type="entry name" value="Ribosomal protein L36"/>
    <property type="match status" value="1"/>
</dbReference>
<dbReference type="PROSITE" id="PS00828">
    <property type="entry name" value="RIBOSOMAL_L36"/>
    <property type="match status" value="1"/>
</dbReference>
<protein>
    <recommendedName>
        <fullName evidence="1">Large ribosomal subunit protein bL36</fullName>
    </recommendedName>
    <alternativeName>
        <fullName evidence="2">50S ribosomal protein L36</fullName>
    </alternativeName>
</protein>
<keyword id="KW-0687">Ribonucleoprotein</keyword>
<keyword id="KW-0689">Ribosomal protein</keyword>
<organism>
    <name type="scientific">Pseudomonas fluorescens (strain ATCC BAA-477 / NRRL B-23932 / Pf-5)</name>
    <dbReference type="NCBI Taxonomy" id="220664"/>
    <lineage>
        <taxon>Bacteria</taxon>
        <taxon>Pseudomonadati</taxon>
        <taxon>Pseudomonadota</taxon>
        <taxon>Gammaproteobacteria</taxon>
        <taxon>Pseudomonadales</taxon>
        <taxon>Pseudomonadaceae</taxon>
        <taxon>Pseudomonas</taxon>
    </lineage>
</organism>
<accession>Q4KA27</accession>
<gene>
    <name evidence="1" type="primary">rpmJ</name>
    <name type="ordered locus">PFL_3806</name>
</gene>
<comment type="similarity">
    <text evidence="1">Belongs to the bacterial ribosomal protein bL36 family.</text>
</comment>
<sequence length="49" mass="5698">MKVLSSLKEAKNRHRDCQIVKRRGRIYVICKSNPRFKARQGGAKNRNKG</sequence>